<sequence>LKCNKLVPLFYKTCPAGKNLCYKMFMVSNKMVPVKRGCIDVCPKSSLLVKYVCCNTDRCN</sequence>
<keyword id="KW-0002">3D-structure</keyword>
<keyword id="KW-0123">Cardiotoxin</keyword>
<keyword id="KW-0204">Cytolysis</keyword>
<keyword id="KW-0903">Direct protein sequencing</keyword>
<keyword id="KW-1015">Disulfide bond</keyword>
<keyword id="KW-0354">Hemolysis</keyword>
<keyword id="KW-0872">Ion channel impairing toxin</keyword>
<keyword id="KW-0472">Membrane</keyword>
<keyword id="KW-0964">Secreted</keyword>
<keyword id="KW-1052">Target cell membrane</keyword>
<keyword id="KW-1053">Target membrane</keyword>
<keyword id="KW-0800">Toxin</keyword>
<evidence type="ECO:0000250" key="1">
    <source>
        <dbReference type="UniProtKB" id="P01443"/>
    </source>
</evidence>
<evidence type="ECO:0000250" key="2">
    <source>
        <dbReference type="UniProtKB" id="P60301"/>
    </source>
</evidence>
<evidence type="ECO:0000269" key="3">
    <source>
    </source>
</evidence>
<evidence type="ECO:0000269" key="4">
    <source ref="1"/>
</evidence>
<evidence type="ECO:0000305" key="5"/>
<evidence type="ECO:0000312" key="6">
    <source>
        <dbReference type="PDB" id="1CHV"/>
    </source>
</evidence>
<evidence type="ECO:0007829" key="7">
    <source>
        <dbReference type="PDB" id="1CHV"/>
    </source>
</evidence>
<proteinExistence type="evidence at protein level"/>
<feature type="chain" id="PRO_0000093480" description="Cytotoxin 5" evidence="4">
    <location>
        <begin position="1"/>
        <end position="60"/>
    </location>
</feature>
<feature type="disulfide bond" evidence="3 6">
    <location>
        <begin position="3"/>
        <end position="21"/>
    </location>
</feature>
<feature type="disulfide bond" evidence="3 6">
    <location>
        <begin position="14"/>
        <end position="38"/>
    </location>
</feature>
<feature type="disulfide bond" evidence="3 6">
    <location>
        <begin position="42"/>
        <end position="53"/>
    </location>
</feature>
<feature type="disulfide bond" evidence="3 6">
    <location>
        <begin position="54"/>
        <end position="59"/>
    </location>
</feature>
<feature type="strand" evidence="7">
    <location>
        <begin position="5"/>
        <end position="9"/>
    </location>
</feature>
<feature type="strand" evidence="7">
    <location>
        <begin position="20"/>
        <end position="26"/>
    </location>
</feature>
<feature type="strand" evidence="7">
    <location>
        <begin position="28"/>
        <end position="30"/>
    </location>
</feature>
<feature type="strand" evidence="7">
    <location>
        <begin position="32"/>
        <end position="40"/>
    </location>
</feature>
<feature type="strand" evidence="7">
    <location>
        <begin position="55"/>
        <end position="57"/>
    </location>
</feature>
<name>3SAT_NAJAT</name>
<accession>P07525</accession>
<organism>
    <name type="scientific">Naja atra</name>
    <name type="common">Chinese cobra</name>
    <dbReference type="NCBI Taxonomy" id="8656"/>
    <lineage>
        <taxon>Eukaryota</taxon>
        <taxon>Metazoa</taxon>
        <taxon>Chordata</taxon>
        <taxon>Craniata</taxon>
        <taxon>Vertebrata</taxon>
        <taxon>Euteleostomi</taxon>
        <taxon>Lepidosauria</taxon>
        <taxon>Squamata</taxon>
        <taxon>Bifurcata</taxon>
        <taxon>Unidentata</taxon>
        <taxon>Episquamata</taxon>
        <taxon>Toxicofera</taxon>
        <taxon>Serpentes</taxon>
        <taxon>Colubroidea</taxon>
        <taxon>Elapidae</taxon>
        <taxon>Elapinae</taxon>
        <taxon>Naja</taxon>
    </lineage>
</organism>
<comment type="function">
    <text evidence="1">Basic protein that binds to cell membrane and depolarizes cardiomyocytes. It also possesses lytic activity on many other cells, including red blood cells. Interaction with sulfatides in the cell membrane induces pore formation and cell internalization and is responsible for cytotoxicity in cardiomyocytes. It targets the mitochondrial membrane and induces mitochondrial swelling and fragmentation. Inhibits protein kinases C. It binds to the integrin alpha-V/beta-3 with a moderate affinity (By similarity). Is cardiotoxic and cytocidal to Yoshida sarcoma cells.</text>
</comment>
<comment type="subunit">
    <text evidence="2">Monomer in solution; Homodimer and oligomer in the presence of negatively charged lipids forming a pore with a size ranging between 20 and 30 Angstroms.</text>
</comment>
<comment type="subcellular location">
    <subcellularLocation>
        <location evidence="4">Secreted</location>
    </subcellularLocation>
    <subcellularLocation>
        <location evidence="2">Target cell membrane</location>
    </subcellularLocation>
</comment>
<comment type="tissue specificity">
    <text evidence="5">Expressed by the venom gland.</text>
</comment>
<comment type="miscellaneous">
    <text evidence="5">Is classified as a S-type cytotoxin, since a serine residue stands at position 28 (Ser-29 in standard classification).</text>
</comment>
<comment type="similarity">
    <text evidence="5">Belongs to the three-finger toxin family. Short-chain subfamily. Type IA cytotoxin sub-subfamily.</text>
</comment>
<reference key="1">
    <citation type="journal article" date="1984" name="Sheng Wu Hua Xue Yu Sheng Wu Wu Li Xue Bao">
        <title>The complete amino acid sequence of cytotoxin D-1.</title>
        <authorList>
            <person name="Wu W.Y."/>
            <person name="Du Y.C."/>
        </authorList>
    </citation>
    <scope>PROTEIN SEQUENCE</scope>
    <scope>SUBCELLULAR LOCATION</scope>
    <source>
        <tissue>Venom</tissue>
    </source>
</reference>
<reference key="2">
    <citation type="journal article" date="2000" name="Protein Sci.">
        <title>Elucidation of the solution structure of cardiotoxin analogue V from the Taiwan cobra (Naja naja atra) -- identification of structural features important for the lethal action of snake venom cardiotoxins.</title>
        <authorList>
            <person name="Jayaraman G."/>
            <person name="Kumar T.K.S."/>
            <person name="Tsai C.-C."/>
            <person name="Srisailam S."/>
            <person name="Chou S.-H."/>
            <person name="Ho C.-L."/>
            <person name="Yu C."/>
        </authorList>
    </citation>
    <scope>STRUCTURE BY NMR</scope>
    <scope>DISULFIDE BONDS</scope>
    <source>
        <tissue>Venom</tissue>
    </source>
</reference>
<protein>
    <recommendedName>
        <fullName>Cytotoxin 5</fullName>
    </recommendedName>
    <alternativeName>
        <fullName>Cardiotoxin A4b</fullName>
        <shortName>CTX-A4b</shortName>
    </alternativeName>
    <alternativeName>
        <fullName>Cardiotoxin T</fullName>
    </alternativeName>
    <alternativeName>
        <fullName>Cardiotoxin analog V</fullName>
        <shortName>CTX V</shortName>
    </alternativeName>
    <alternativeName>
        <fullName>Cytotoxin D-1</fullName>
    </alternativeName>
    <alternativeName>
        <fullName>Membrane toxin D1</fullName>
    </alternativeName>
</protein>
<dbReference type="PIR" id="JC0001">
    <property type="entry name" value="H3NJ5F"/>
</dbReference>
<dbReference type="PDB" id="1CHV">
    <property type="method" value="NMR"/>
    <property type="chains" value="S=1-60"/>
</dbReference>
<dbReference type="PDBsum" id="1CHV"/>
<dbReference type="SMR" id="P07525"/>
<dbReference type="EvolutionaryTrace" id="P07525"/>
<dbReference type="GO" id="GO:0005576">
    <property type="term" value="C:extracellular region"/>
    <property type="evidence" value="ECO:0007669"/>
    <property type="project" value="UniProtKB-SubCell"/>
</dbReference>
<dbReference type="GO" id="GO:0016020">
    <property type="term" value="C:membrane"/>
    <property type="evidence" value="ECO:0007669"/>
    <property type="project" value="UniProtKB-KW"/>
</dbReference>
<dbReference type="GO" id="GO:0044218">
    <property type="term" value="C:other organism cell membrane"/>
    <property type="evidence" value="ECO:0007669"/>
    <property type="project" value="UniProtKB-KW"/>
</dbReference>
<dbReference type="GO" id="GO:0099106">
    <property type="term" value="F:ion channel regulator activity"/>
    <property type="evidence" value="ECO:0007669"/>
    <property type="project" value="UniProtKB-KW"/>
</dbReference>
<dbReference type="GO" id="GO:0090729">
    <property type="term" value="F:toxin activity"/>
    <property type="evidence" value="ECO:0007669"/>
    <property type="project" value="UniProtKB-KW"/>
</dbReference>
<dbReference type="GO" id="GO:0031640">
    <property type="term" value="P:killing of cells of another organism"/>
    <property type="evidence" value="ECO:0007669"/>
    <property type="project" value="UniProtKB-KW"/>
</dbReference>
<dbReference type="CDD" id="cd00206">
    <property type="entry name" value="TFP_snake_toxin"/>
    <property type="match status" value="1"/>
</dbReference>
<dbReference type="FunFam" id="2.10.60.10:FF:000024">
    <property type="entry name" value="Cytotoxin 1"/>
    <property type="match status" value="1"/>
</dbReference>
<dbReference type="Gene3D" id="2.10.60.10">
    <property type="entry name" value="CD59"/>
    <property type="match status" value="1"/>
</dbReference>
<dbReference type="InterPro" id="IPR003572">
    <property type="entry name" value="Cytotoxin_Cobra"/>
</dbReference>
<dbReference type="InterPro" id="IPR003571">
    <property type="entry name" value="Snake_3FTx"/>
</dbReference>
<dbReference type="InterPro" id="IPR045860">
    <property type="entry name" value="Snake_toxin-like_sf"/>
</dbReference>
<dbReference type="InterPro" id="IPR018354">
    <property type="entry name" value="Snake_toxin_con_site"/>
</dbReference>
<dbReference type="InterPro" id="IPR054131">
    <property type="entry name" value="Toxin_cobra-type"/>
</dbReference>
<dbReference type="Pfam" id="PF21947">
    <property type="entry name" value="Toxin_cobra-type"/>
    <property type="match status" value="1"/>
</dbReference>
<dbReference type="PRINTS" id="PR00282">
    <property type="entry name" value="CYTOTOXIN"/>
</dbReference>
<dbReference type="SUPFAM" id="SSF57302">
    <property type="entry name" value="Snake toxin-like"/>
    <property type="match status" value="1"/>
</dbReference>
<dbReference type="PROSITE" id="PS00272">
    <property type="entry name" value="SNAKE_TOXIN"/>
    <property type="match status" value="1"/>
</dbReference>